<feature type="chain" id="PRO_1000197416" description="Undecaprenyl-diphosphatase">
    <location>
        <begin position="1"/>
        <end position="257"/>
    </location>
</feature>
<feature type="transmembrane region" description="Helical" evidence="1">
    <location>
        <begin position="4"/>
        <end position="24"/>
    </location>
</feature>
<feature type="transmembrane region" description="Helical" evidence="1">
    <location>
        <begin position="51"/>
        <end position="71"/>
    </location>
</feature>
<feature type="transmembrane region" description="Helical" evidence="1">
    <location>
        <begin position="78"/>
        <end position="98"/>
    </location>
</feature>
<feature type="transmembrane region" description="Helical" evidence="1">
    <location>
        <begin position="106"/>
        <end position="126"/>
    </location>
</feature>
<feature type="transmembrane region" description="Helical" evidence="1">
    <location>
        <begin position="133"/>
        <end position="153"/>
    </location>
</feature>
<feature type="transmembrane region" description="Helical" evidence="1">
    <location>
        <begin position="171"/>
        <end position="191"/>
    </location>
</feature>
<feature type="transmembrane region" description="Helical" evidence="1">
    <location>
        <begin position="207"/>
        <end position="227"/>
    </location>
</feature>
<feature type="transmembrane region" description="Helical" evidence="1">
    <location>
        <begin position="235"/>
        <end position="255"/>
    </location>
</feature>
<accession>B5YID8</accession>
<evidence type="ECO:0000255" key="1">
    <source>
        <dbReference type="HAMAP-Rule" id="MF_01006"/>
    </source>
</evidence>
<name>UPPP_THEYD</name>
<protein>
    <recommendedName>
        <fullName evidence="1">Undecaprenyl-diphosphatase</fullName>
        <ecNumber evidence="1">3.6.1.27</ecNumber>
    </recommendedName>
    <alternativeName>
        <fullName evidence="1">Bacitracin resistance protein</fullName>
    </alternativeName>
    <alternativeName>
        <fullName evidence="1">Undecaprenyl pyrophosphate phosphatase</fullName>
    </alternativeName>
</protein>
<keyword id="KW-0046">Antibiotic resistance</keyword>
<keyword id="KW-0997">Cell inner membrane</keyword>
<keyword id="KW-1003">Cell membrane</keyword>
<keyword id="KW-0133">Cell shape</keyword>
<keyword id="KW-0961">Cell wall biogenesis/degradation</keyword>
<keyword id="KW-0378">Hydrolase</keyword>
<keyword id="KW-0472">Membrane</keyword>
<keyword id="KW-0573">Peptidoglycan synthesis</keyword>
<keyword id="KW-1185">Reference proteome</keyword>
<keyword id="KW-0812">Transmembrane</keyword>
<keyword id="KW-1133">Transmembrane helix</keyword>
<sequence>MDELFKAIILGIIQGITEFLPISSTAHLVITPWIFGWSGIVNSLSFDIAVHVGTLISLLYCFWKDWINIFFRERKMLLFIIIGTIPAGIAGIAFHDLIESALRHPLIIVVTLILVGFLMLYAEKVGKKLIRSITLSDAVVIGTAQAIALIPGVSRSGITITAGLFKGLDRAYAAKFSFLLSTPAIAGAAMLDFYKSIKIGHSHDYSLFIIGVISAAITGIIAIKFLLSFLQKYPLNLFIYYRWFLAVVIFLLYFFRN</sequence>
<comment type="function">
    <text evidence="1">Catalyzes the dephosphorylation of undecaprenyl diphosphate (UPP). Confers resistance to bacitracin.</text>
</comment>
<comment type="catalytic activity">
    <reaction evidence="1">
        <text>di-trans,octa-cis-undecaprenyl diphosphate + H2O = di-trans,octa-cis-undecaprenyl phosphate + phosphate + H(+)</text>
        <dbReference type="Rhea" id="RHEA:28094"/>
        <dbReference type="ChEBI" id="CHEBI:15377"/>
        <dbReference type="ChEBI" id="CHEBI:15378"/>
        <dbReference type="ChEBI" id="CHEBI:43474"/>
        <dbReference type="ChEBI" id="CHEBI:58405"/>
        <dbReference type="ChEBI" id="CHEBI:60392"/>
        <dbReference type="EC" id="3.6.1.27"/>
    </reaction>
</comment>
<comment type="subcellular location">
    <subcellularLocation>
        <location evidence="1">Cell inner membrane</location>
        <topology evidence="1">Multi-pass membrane protein</topology>
    </subcellularLocation>
</comment>
<comment type="miscellaneous">
    <text>Bacitracin is thought to be involved in the inhibition of peptidoglycan synthesis by sequestering undecaprenyl diphosphate, thereby reducing the pool of lipid carrier available.</text>
</comment>
<comment type="similarity">
    <text evidence="1">Belongs to the UppP family.</text>
</comment>
<reference key="1">
    <citation type="submission" date="2008-08" db="EMBL/GenBank/DDBJ databases">
        <title>The complete genome sequence of Thermodesulfovibrio yellowstonii strain ATCC 51303 / DSM 11347 / YP87.</title>
        <authorList>
            <person name="Dodson R.J."/>
            <person name="Durkin A.S."/>
            <person name="Wu M."/>
            <person name="Eisen J."/>
            <person name="Sutton G."/>
        </authorList>
    </citation>
    <scope>NUCLEOTIDE SEQUENCE [LARGE SCALE GENOMIC DNA]</scope>
    <source>
        <strain>ATCC 51303 / DSM 11347 / YP87</strain>
    </source>
</reference>
<gene>
    <name evidence="1" type="primary">uppP</name>
    <name type="ordered locus">THEYE_A1979</name>
</gene>
<organism>
    <name type="scientific">Thermodesulfovibrio yellowstonii (strain ATCC 51303 / DSM 11347 / YP87)</name>
    <dbReference type="NCBI Taxonomy" id="289376"/>
    <lineage>
        <taxon>Bacteria</taxon>
        <taxon>Pseudomonadati</taxon>
        <taxon>Nitrospirota</taxon>
        <taxon>Thermodesulfovibrionia</taxon>
        <taxon>Thermodesulfovibrionales</taxon>
        <taxon>Thermodesulfovibrionaceae</taxon>
        <taxon>Thermodesulfovibrio</taxon>
    </lineage>
</organism>
<dbReference type="EC" id="3.6.1.27" evidence="1"/>
<dbReference type="EMBL" id="CP001147">
    <property type="protein sequence ID" value="ACI22011.1"/>
    <property type="molecule type" value="Genomic_DNA"/>
</dbReference>
<dbReference type="RefSeq" id="WP_012546705.1">
    <property type="nucleotide sequence ID" value="NC_011296.1"/>
</dbReference>
<dbReference type="RefSeq" id="YP_002249769.1">
    <property type="nucleotide sequence ID" value="NC_011296.1"/>
</dbReference>
<dbReference type="SMR" id="B5YID8"/>
<dbReference type="FunCoup" id="B5YID8">
    <property type="interactions" value="298"/>
</dbReference>
<dbReference type="STRING" id="289376.THEYE_A1979"/>
<dbReference type="EnsemblBacteria" id="ACI22011">
    <property type="protein sequence ID" value="ACI22011"/>
    <property type="gene ID" value="THEYE_A1979"/>
</dbReference>
<dbReference type="KEGG" id="tye:THEYE_A1979"/>
<dbReference type="PATRIC" id="fig|289376.4.peg.1934"/>
<dbReference type="eggNOG" id="COG1968">
    <property type="taxonomic scope" value="Bacteria"/>
</dbReference>
<dbReference type="HOGENOM" id="CLU_060296_1_0_0"/>
<dbReference type="InParanoid" id="B5YID8"/>
<dbReference type="OrthoDB" id="9808289at2"/>
<dbReference type="Proteomes" id="UP000000718">
    <property type="component" value="Chromosome"/>
</dbReference>
<dbReference type="GO" id="GO:0005886">
    <property type="term" value="C:plasma membrane"/>
    <property type="evidence" value="ECO:0000318"/>
    <property type="project" value="GO_Central"/>
</dbReference>
<dbReference type="GO" id="GO:0050380">
    <property type="term" value="F:undecaprenyl-diphosphatase activity"/>
    <property type="evidence" value="ECO:0000318"/>
    <property type="project" value="GO_Central"/>
</dbReference>
<dbReference type="GO" id="GO:0071555">
    <property type="term" value="P:cell wall organization"/>
    <property type="evidence" value="ECO:0007669"/>
    <property type="project" value="UniProtKB-KW"/>
</dbReference>
<dbReference type="GO" id="GO:0009252">
    <property type="term" value="P:peptidoglycan biosynthetic process"/>
    <property type="evidence" value="ECO:0007669"/>
    <property type="project" value="UniProtKB-KW"/>
</dbReference>
<dbReference type="GO" id="GO:0000270">
    <property type="term" value="P:peptidoglycan metabolic process"/>
    <property type="evidence" value="ECO:0000318"/>
    <property type="project" value="GO_Central"/>
</dbReference>
<dbReference type="GO" id="GO:0008360">
    <property type="term" value="P:regulation of cell shape"/>
    <property type="evidence" value="ECO:0007669"/>
    <property type="project" value="UniProtKB-KW"/>
</dbReference>
<dbReference type="GO" id="GO:0046677">
    <property type="term" value="P:response to antibiotic"/>
    <property type="evidence" value="ECO:0007669"/>
    <property type="project" value="UniProtKB-UniRule"/>
</dbReference>
<dbReference type="HAMAP" id="MF_01006">
    <property type="entry name" value="Undec_diphosphatase"/>
    <property type="match status" value="1"/>
</dbReference>
<dbReference type="InterPro" id="IPR003824">
    <property type="entry name" value="UppP"/>
</dbReference>
<dbReference type="PANTHER" id="PTHR30622">
    <property type="entry name" value="UNDECAPRENYL-DIPHOSPHATASE"/>
    <property type="match status" value="1"/>
</dbReference>
<dbReference type="PANTHER" id="PTHR30622:SF4">
    <property type="entry name" value="UNDECAPRENYL-DIPHOSPHATASE"/>
    <property type="match status" value="1"/>
</dbReference>
<dbReference type="Pfam" id="PF02673">
    <property type="entry name" value="BacA"/>
    <property type="match status" value="1"/>
</dbReference>
<proteinExistence type="inferred from homology"/>